<sequence length="177" mass="18612">MAELATVARPYAEALYQVARQGDVAVWVEQVSALAQVAENAELRQFAGSPKVSAEQVYDVVAAAAGVSLSTGVQHFLRTVIDNGRLAVLPAIAVQFNALVNAASGVADAAIFSAYPIEPAQLAEVVAALEQRFGRKLSVNVTLEPELIGGIRVVVGDEVLDTSVKARLERMKVALSA</sequence>
<reference key="1">
    <citation type="submission" date="2008-03" db="EMBL/GenBank/DDBJ databases">
        <title>Complete sequence of Leptothrix cholodnii SP-6.</title>
        <authorList>
            <consortium name="US DOE Joint Genome Institute"/>
            <person name="Copeland A."/>
            <person name="Lucas S."/>
            <person name="Lapidus A."/>
            <person name="Glavina del Rio T."/>
            <person name="Dalin E."/>
            <person name="Tice H."/>
            <person name="Bruce D."/>
            <person name="Goodwin L."/>
            <person name="Pitluck S."/>
            <person name="Chertkov O."/>
            <person name="Brettin T."/>
            <person name="Detter J.C."/>
            <person name="Han C."/>
            <person name="Kuske C.R."/>
            <person name="Schmutz J."/>
            <person name="Larimer F."/>
            <person name="Land M."/>
            <person name="Hauser L."/>
            <person name="Kyrpides N."/>
            <person name="Lykidis A."/>
            <person name="Emerson D."/>
            <person name="Richardson P."/>
        </authorList>
    </citation>
    <scope>NUCLEOTIDE SEQUENCE [LARGE SCALE GENOMIC DNA]</scope>
    <source>
        <strain>ATCC 51168 / LMG 8142 / SP-6</strain>
    </source>
</reference>
<organism>
    <name type="scientific">Leptothrix cholodnii (strain ATCC 51168 / LMG 8142 / SP-6)</name>
    <name type="common">Leptothrix discophora (strain SP-6)</name>
    <dbReference type="NCBI Taxonomy" id="395495"/>
    <lineage>
        <taxon>Bacteria</taxon>
        <taxon>Pseudomonadati</taxon>
        <taxon>Pseudomonadota</taxon>
        <taxon>Betaproteobacteria</taxon>
        <taxon>Burkholderiales</taxon>
        <taxon>Sphaerotilaceae</taxon>
        <taxon>Leptothrix</taxon>
    </lineage>
</organism>
<accession>B1Y3T0</accession>
<proteinExistence type="inferred from homology"/>
<gene>
    <name evidence="1" type="primary">atpH</name>
    <name type="ordered locus">Lcho_3529</name>
</gene>
<dbReference type="EMBL" id="CP001013">
    <property type="protein sequence ID" value="ACB35783.1"/>
    <property type="molecule type" value="Genomic_DNA"/>
</dbReference>
<dbReference type="RefSeq" id="WP_012348530.1">
    <property type="nucleotide sequence ID" value="NC_010524.1"/>
</dbReference>
<dbReference type="SMR" id="B1Y3T0"/>
<dbReference type="STRING" id="395495.Lcho_3529"/>
<dbReference type="KEGG" id="lch:Lcho_3529"/>
<dbReference type="eggNOG" id="COG0712">
    <property type="taxonomic scope" value="Bacteria"/>
</dbReference>
<dbReference type="HOGENOM" id="CLU_085114_3_0_4"/>
<dbReference type="OrthoDB" id="9816221at2"/>
<dbReference type="Proteomes" id="UP000001693">
    <property type="component" value="Chromosome"/>
</dbReference>
<dbReference type="GO" id="GO:0005886">
    <property type="term" value="C:plasma membrane"/>
    <property type="evidence" value="ECO:0007669"/>
    <property type="project" value="UniProtKB-SubCell"/>
</dbReference>
<dbReference type="GO" id="GO:0045259">
    <property type="term" value="C:proton-transporting ATP synthase complex"/>
    <property type="evidence" value="ECO:0007669"/>
    <property type="project" value="UniProtKB-KW"/>
</dbReference>
<dbReference type="GO" id="GO:0046933">
    <property type="term" value="F:proton-transporting ATP synthase activity, rotational mechanism"/>
    <property type="evidence" value="ECO:0007669"/>
    <property type="project" value="UniProtKB-UniRule"/>
</dbReference>
<dbReference type="Gene3D" id="1.10.520.20">
    <property type="entry name" value="N-terminal domain of the delta subunit of the F1F0-ATP synthase"/>
    <property type="match status" value="1"/>
</dbReference>
<dbReference type="HAMAP" id="MF_01416">
    <property type="entry name" value="ATP_synth_delta_bact"/>
    <property type="match status" value="1"/>
</dbReference>
<dbReference type="InterPro" id="IPR026015">
    <property type="entry name" value="ATP_synth_OSCP/delta_N_sf"/>
</dbReference>
<dbReference type="InterPro" id="IPR000711">
    <property type="entry name" value="ATPase_OSCP/dsu"/>
</dbReference>
<dbReference type="NCBIfam" id="TIGR01145">
    <property type="entry name" value="ATP_synt_delta"/>
    <property type="match status" value="1"/>
</dbReference>
<dbReference type="NCBIfam" id="NF004402">
    <property type="entry name" value="PRK05758.2-2"/>
    <property type="match status" value="1"/>
</dbReference>
<dbReference type="PANTHER" id="PTHR11910">
    <property type="entry name" value="ATP SYNTHASE DELTA CHAIN"/>
    <property type="match status" value="1"/>
</dbReference>
<dbReference type="Pfam" id="PF00213">
    <property type="entry name" value="OSCP"/>
    <property type="match status" value="1"/>
</dbReference>
<dbReference type="PRINTS" id="PR00125">
    <property type="entry name" value="ATPASEDELTA"/>
</dbReference>
<dbReference type="SUPFAM" id="SSF47928">
    <property type="entry name" value="N-terminal domain of the delta subunit of the F1F0-ATP synthase"/>
    <property type="match status" value="1"/>
</dbReference>
<protein>
    <recommendedName>
        <fullName evidence="1">ATP synthase subunit delta</fullName>
    </recommendedName>
    <alternativeName>
        <fullName evidence="1">ATP synthase F(1) sector subunit delta</fullName>
    </alternativeName>
    <alternativeName>
        <fullName evidence="1">F-type ATPase subunit delta</fullName>
        <shortName evidence="1">F-ATPase subunit delta</shortName>
    </alternativeName>
</protein>
<evidence type="ECO:0000255" key="1">
    <source>
        <dbReference type="HAMAP-Rule" id="MF_01416"/>
    </source>
</evidence>
<name>ATPD_LEPCP</name>
<comment type="function">
    <text evidence="1">F(1)F(0) ATP synthase produces ATP from ADP in the presence of a proton or sodium gradient. F-type ATPases consist of two structural domains, F(1) containing the extramembraneous catalytic core and F(0) containing the membrane proton channel, linked together by a central stalk and a peripheral stalk. During catalysis, ATP synthesis in the catalytic domain of F(1) is coupled via a rotary mechanism of the central stalk subunits to proton translocation.</text>
</comment>
<comment type="function">
    <text evidence="1">This protein is part of the stalk that links CF(0) to CF(1). It either transmits conformational changes from CF(0) to CF(1) or is implicated in proton conduction.</text>
</comment>
<comment type="subunit">
    <text evidence="1">F-type ATPases have 2 components, F(1) - the catalytic core - and F(0) - the membrane proton channel. F(1) has five subunits: alpha(3), beta(3), gamma(1), delta(1), epsilon(1). F(0) has three main subunits: a(1), b(2) and c(10-14). The alpha and beta chains form an alternating ring which encloses part of the gamma chain. F(1) is attached to F(0) by a central stalk formed by the gamma and epsilon chains, while a peripheral stalk is formed by the delta and b chains.</text>
</comment>
<comment type="subcellular location">
    <subcellularLocation>
        <location evidence="1">Cell inner membrane</location>
        <topology evidence="1">Peripheral membrane protein</topology>
    </subcellularLocation>
</comment>
<comment type="similarity">
    <text evidence="1">Belongs to the ATPase delta chain family.</text>
</comment>
<feature type="chain" id="PRO_1000184743" description="ATP synthase subunit delta">
    <location>
        <begin position="1"/>
        <end position="177"/>
    </location>
</feature>
<keyword id="KW-0066">ATP synthesis</keyword>
<keyword id="KW-0997">Cell inner membrane</keyword>
<keyword id="KW-1003">Cell membrane</keyword>
<keyword id="KW-0139">CF(1)</keyword>
<keyword id="KW-0375">Hydrogen ion transport</keyword>
<keyword id="KW-0406">Ion transport</keyword>
<keyword id="KW-0472">Membrane</keyword>
<keyword id="KW-1185">Reference proteome</keyword>
<keyword id="KW-0813">Transport</keyword>